<dbReference type="EC" id="3.6.4.13"/>
<dbReference type="EMBL" id="D29795">
    <property type="protein sequence ID" value="BAA06178.1"/>
    <property type="molecule type" value="Genomic_DNA"/>
</dbReference>
<dbReference type="EMBL" id="CU329671">
    <property type="protein sequence ID" value="CAA22882.1"/>
    <property type="molecule type" value="Genomic_DNA"/>
</dbReference>
<dbReference type="PIR" id="S46654">
    <property type="entry name" value="S46654"/>
</dbReference>
<dbReference type="RefSeq" id="NP_596324.1">
    <property type="nucleotide sequence ID" value="NM_001022246.2"/>
</dbReference>
<dbReference type="SMR" id="Q09181"/>
<dbReference type="BioGRID" id="277730">
    <property type="interactions" value="19"/>
</dbReference>
<dbReference type="FunCoup" id="Q09181">
    <property type="interactions" value="861"/>
</dbReference>
<dbReference type="STRING" id="284812.Q09181"/>
<dbReference type="iPTMnet" id="Q09181"/>
<dbReference type="PaxDb" id="4896-SPBC776.09.1"/>
<dbReference type="EnsemblFungi" id="SPBC776.09.1">
    <property type="protein sequence ID" value="SPBC776.09.1:pep"/>
    <property type="gene ID" value="SPBC776.09"/>
</dbReference>
<dbReference type="GeneID" id="2541216"/>
<dbReference type="KEGG" id="spo:2541216"/>
<dbReference type="PomBase" id="SPBC776.09">
    <property type="gene designation" value="ste13"/>
</dbReference>
<dbReference type="VEuPathDB" id="FungiDB:SPBC776.09"/>
<dbReference type="eggNOG" id="KOG0326">
    <property type="taxonomic scope" value="Eukaryota"/>
</dbReference>
<dbReference type="HOGENOM" id="CLU_003041_30_0_1"/>
<dbReference type="InParanoid" id="Q09181"/>
<dbReference type="OMA" id="TYEDRHT"/>
<dbReference type="PhylomeDB" id="Q09181"/>
<dbReference type="CD-CODE" id="0808F6DD">
    <property type="entry name" value="P-body"/>
</dbReference>
<dbReference type="PRO" id="PR:Q09181"/>
<dbReference type="Proteomes" id="UP000002485">
    <property type="component" value="Chromosome II"/>
</dbReference>
<dbReference type="GO" id="GO:0005737">
    <property type="term" value="C:cytoplasm"/>
    <property type="evidence" value="ECO:0007005"/>
    <property type="project" value="PomBase"/>
</dbReference>
<dbReference type="GO" id="GO:0010494">
    <property type="term" value="C:cytoplasmic stress granule"/>
    <property type="evidence" value="ECO:0000314"/>
    <property type="project" value="PomBase"/>
</dbReference>
<dbReference type="GO" id="GO:0000932">
    <property type="term" value="C:P-body"/>
    <property type="evidence" value="ECO:0000314"/>
    <property type="project" value="PomBase"/>
</dbReference>
<dbReference type="GO" id="GO:0005524">
    <property type="term" value="F:ATP binding"/>
    <property type="evidence" value="ECO:0007669"/>
    <property type="project" value="UniProtKB-KW"/>
</dbReference>
<dbReference type="GO" id="GO:0016887">
    <property type="term" value="F:ATP hydrolysis activity"/>
    <property type="evidence" value="ECO:0007669"/>
    <property type="project" value="RHEA"/>
</dbReference>
<dbReference type="GO" id="GO:0003729">
    <property type="term" value="F:mRNA binding"/>
    <property type="evidence" value="ECO:0000318"/>
    <property type="project" value="GO_Central"/>
</dbReference>
<dbReference type="GO" id="GO:0003724">
    <property type="term" value="F:RNA helicase activity"/>
    <property type="evidence" value="ECO:0000304"/>
    <property type="project" value="PomBase"/>
</dbReference>
<dbReference type="GO" id="GO:0000290">
    <property type="term" value="P:deadenylation-dependent decapping of nuclear-transcribed mRNA"/>
    <property type="evidence" value="ECO:0000266"/>
    <property type="project" value="PomBase"/>
</dbReference>
<dbReference type="GO" id="GO:0006397">
    <property type="term" value="P:mRNA processing"/>
    <property type="evidence" value="ECO:0007669"/>
    <property type="project" value="UniProtKB-KW"/>
</dbReference>
<dbReference type="GO" id="GO:0051028">
    <property type="term" value="P:mRNA transport"/>
    <property type="evidence" value="ECO:0007669"/>
    <property type="project" value="UniProtKB-KW"/>
</dbReference>
<dbReference type="GO" id="GO:0017148">
    <property type="term" value="P:negative regulation of translation"/>
    <property type="evidence" value="ECO:0000318"/>
    <property type="project" value="GO_Central"/>
</dbReference>
<dbReference type="GO" id="GO:0033962">
    <property type="term" value="P:P-body assembly"/>
    <property type="evidence" value="ECO:0000318"/>
    <property type="project" value="GO_Central"/>
</dbReference>
<dbReference type="GO" id="GO:0034063">
    <property type="term" value="P:stress granule assembly"/>
    <property type="evidence" value="ECO:0000318"/>
    <property type="project" value="GO_Central"/>
</dbReference>
<dbReference type="CDD" id="cd17940">
    <property type="entry name" value="DEADc_DDX6"/>
    <property type="match status" value="1"/>
</dbReference>
<dbReference type="CDD" id="cd18787">
    <property type="entry name" value="SF2_C_DEAD"/>
    <property type="match status" value="1"/>
</dbReference>
<dbReference type="FunFam" id="3.40.50.300:FF:000114">
    <property type="entry name" value="ATP-dependent RNA helicase DDX6"/>
    <property type="match status" value="1"/>
</dbReference>
<dbReference type="FunFam" id="3.40.50.300:FF:000364">
    <property type="entry name" value="ATP-dependent RNA helicase DDX6"/>
    <property type="match status" value="1"/>
</dbReference>
<dbReference type="Gene3D" id="3.40.50.300">
    <property type="entry name" value="P-loop containing nucleotide triphosphate hydrolases"/>
    <property type="match status" value="2"/>
</dbReference>
<dbReference type="InterPro" id="IPR011545">
    <property type="entry name" value="DEAD/DEAH_box_helicase_dom"/>
</dbReference>
<dbReference type="InterPro" id="IPR014001">
    <property type="entry name" value="Helicase_ATP-bd"/>
</dbReference>
<dbReference type="InterPro" id="IPR001650">
    <property type="entry name" value="Helicase_C-like"/>
</dbReference>
<dbReference type="InterPro" id="IPR027417">
    <property type="entry name" value="P-loop_NTPase"/>
</dbReference>
<dbReference type="InterPro" id="IPR000629">
    <property type="entry name" value="RNA-helicase_DEAD-box_CS"/>
</dbReference>
<dbReference type="InterPro" id="IPR014014">
    <property type="entry name" value="RNA_helicase_DEAD_Q_motif"/>
</dbReference>
<dbReference type="PANTHER" id="PTHR47960">
    <property type="entry name" value="DEAD-BOX ATP-DEPENDENT RNA HELICASE 50"/>
    <property type="match status" value="1"/>
</dbReference>
<dbReference type="Pfam" id="PF00270">
    <property type="entry name" value="DEAD"/>
    <property type="match status" value="1"/>
</dbReference>
<dbReference type="Pfam" id="PF00271">
    <property type="entry name" value="Helicase_C"/>
    <property type="match status" value="1"/>
</dbReference>
<dbReference type="SMART" id="SM00487">
    <property type="entry name" value="DEXDc"/>
    <property type="match status" value="1"/>
</dbReference>
<dbReference type="SMART" id="SM00490">
    <property type="entry name" value="HELICc"/>
    <property type="match status" value="1"/>
</dbReference>
<dbReference type="SUPFAM" id="SSF52540">
    <property type="entry name" value="P-loop containing nucleoside triphosphate hydrolases"/>
    <property type="match status" value="1"/>
</dbReference>
<dbReference type="PROSITE" id="PS00039">
    <property type="entry name" value="DEAD_ATP_HELICASE"/>
    <property type="match status" value="1"/>
</dbReference>
<dbReference type="PROSITE" id="PS51192">
    <property type="entry name" value="HELICASE_ATP_BIND_1"/>
    <property type="match status" value="1"/>
</dbReference>
<dbReference type="PROSITE" id="PS51194">
    <property type="entry name" value="HELICASE_CTER"/>
    <property type="match status" value="1"/>
</dbReference>
<dbReference type="PROSITE" id="PS51195">
    <property type="entry name" value="Q_MOTIF"/>
    <property type="match status" value="1"/>
</dbReference>
<reference key="1">
    <citation type="journal article" date="1994" name="Mol. Gen. Genet.">
        <title>The ste13+ gene encoding a putative RNA helicase is essential for nitrogen starvation-induced G1 arrest and initiation of sexual development in the fission yeast Schizosaccharomyces pombe.</title>
        <authorList>
            <person name="Maekawa H."/>
            <person name="Nakagawa T."/>
            <person name="Uno Y."/>
            <person name="Kitamura K."/>
            <person name="Shimoda C."/>
        </authorList>
    </citation>
    <scope>NUCLEOTIDE SEQUENCE [GENOMIC DNA]</scope>
</reference>
<reference key="2">
    <citation type="journal article" date="2002" name="Nature">
        <title>The genome sequence of Schizosaccharomyces pombe.</title>
        <authorList>
            <person name="Wood V."/>
            <person name="Gwilliam R."/>
            <person name="Rajandream M.A."/>
            <person name="Lyne M.H."/>
            <person name="Lyne R."/>
            <person name="Stewart A."/>
            <person name="Sgouros J.G."/>
            <person name="Peat N."/>
            <person name="Hayles J."/>
            <person name="Baker S.G."/>
            <person name="Basham D."/>
            <person name="Bowman S."/>
            <person name="Brooks K."/>
            <person name="Brown D."/>
            <person name="Brown S."/>
            <person name="Chillingworth T."/>
            <person name="Churcher C.M."/>
            <person name="Collins M."/>
            <person name="Connor R."/>
            <person name="Cronin A."/>
            <person name="Davis P."/>
            <person name="Feltwell T."/>
            <person name="Fraser A."/>
            <person name="Gentles S."/>
            <person name="Goble A."/>
            <person name="Hamlin N."/>
            <person name="Harris D.E."/>
            <person name="Hidalgo J."/>
            <person name="Hodgson G."/>
            <person name="Holroyd S."/>
            <person name="Hornsby T."/>
            <person name="Howarth S."/>
            <person name="Huckle E.J."/>
            <person name="Hunt S."/>
            <person name="Jagels K."/>
            <person name="James K.D."/>
            <person name="Jones L."/>
            <person name="Jones M."/>
            <person name="Leather S."/>
            <person name="McDonald S."/>
            <person name="McLean J."/>
            <person name="Mooney P."/>
            <person name="Moule S."/>
            <person name="Mungall K.L."/>
            <person name="Murphy L.D."/>
            <person name="Niblett D."/>
            <person name="Odell C."/>
            <person name="Oliver K."/>
            <person name="O'Neil S."/>
            <person name="Pearson D."/>
            <person name="Quail M.A."/>
            <person name="Rabbinowitsch E."/>
            <person name="Rutherford K.M."/>
            <person name="Rutter S."/>
            <person name="Saunders D."/>
            <person name="Seeger K."/>
            <person name="Sharp S."/>
            <person name="Skelton J."/>
            <person name="Simmonds M.N."/>
            <person name="Squares R."/>
            <person name="Squares S."/>
            <person name="Stevens K."/>
            <person name="Taylor K."/>
            <person name="Taylor R.G."/>
            <person name="Tivey A."/>
            <person name="Walsh S.V."/>
            <person name="Warren T."/>
            <person name="Whitehead S."/>
            <person name="Woodward J.R."/>
            <person name="Volckaert G."/>
            <person name="Aert R."/>
            <person name="Robben J."/>
            <person name="Grymonprez B."/>
            <person name="Weltjens I."/>
            <person name="Vanstreels E."/>
            <person name="Rieger M."/>
            <person name="Schaefer M."/>
            <person name="Mueller-Auer S."/>
            <person name="Gabel C."/>
            <person name="Fuchs M."/>
            <person name="Duesterhoeft A."/>
            <person name="Fritzc C."/>
            <person name="Holzer E."/>
            <person name="Moestl D."/>
            <person name="Hilbert H."/>
            <person name="Borzym K."/>
            <person name="Langer I."/>
            <person name="Beck A."/>
            <person name="Lehrach H."/>
            <person name="Reinhardt R."/>
            <person name="Pohl T.M."/>
            <person name="Eger P."/>
            <person name="Zimmermann W."/>
            <person name="Wedler H."/>
            <person name="Wambutt R."/>
            <person name="Purnelle B."/>
            <person name="Goffeau A."/>
            <person name="Cadieu E."/>
            <person name="Dreano S."/>
            <person name="Gloux S."/>
            <person name="Lelaure V."/>
            <person name="Mottier S."/>
            <person name="Galibert F."/>
            <person name="Aves S.J."/>
            <person name="Xiang Z."/>
            <person name="Hunt C."/>
            <person name="Moore K."/>
            <person name="Hurst S.M."/>
            <person name="Lucas M."/>
            <person name="Rochet M."/>
            <person name="Gaillardin C."/>
            <person name="Tallada V.A."/>
            <person name="Garzon A."/>
            <person name="Thode G."/>
            <person name="Daga R.R."/>
            <person name="Cruzado L."/>
            <person name="Jimenez J."/>
            <person name="Sanchez M."/>
            <person name="del Rey F."/>
            <person name="Benito J."/>
            <person name="Dominguez A."/>
            <person name="Revuelta J.L."/>
            <person name="Moreno S."/>
            <person name="Armstrong J."/>
            <person name="Forsburg S.L."/>
            <person name="Cerutti L."/>
            <person name="Lowe T."/>
            <person name="McCombie W.R."/>
            <person name="Paulsen I."/>
            <person name="Potashkin J."/>
            <person name="Shpakovski G.V."/>
            <person name="Ussery D."/>
            <person name="Barrell B.G."/>
            <person name="Nurse P."/>
        </authorList>
    </citation>
    <scope>NUCLEOTIDE SEQUENCE [LARGE SCALE GENOMIC DNA]</scope>
    <source>
        <strain>972 / ATCC 24843</strain>
    </source>
</reference>
<organism>
    <name type="scientific">Schizosaccharomyces pombe (strain 972 / ATCC 24843)</name>
    <name type="common">Fission yeast</name>
    <dbReference type="NCBI Taxonomy" id="284812"/>
    <lineage>
        <taxon>Eukaryota</taxon>
        <taxon>Fungi</taxon>
        <taxon>Dikarya</taxon>
        <taxon>Ascomycota</taxon>
        <taxon>Taphrinomycotina</taxon>
        <taxon>Schizosaccharomycetes</taxon>
        <taxon>Schizosaccharomycetales</taxon>
        <taxon>Schizosaccharomycetaceae</taxon>
        <taxon>Schizosaccharomyces</taxon>
    </lineage>
</organism>
<feature type="chain" id="PRO_0000055066" description="Putative ATP-dependent RNA helicase ste13">
    <location>
        <begin position="1"/>
        <end position="485"/>
    </location>
</feature>
<feature type="domain" description="Helicase ATP-binding" evidence="2">
    <location>
        <begin position="75"/>
        <end position="245"/>
    </location>
</feature>
<feature type="domain" description="Helicase C-terminal" evidence="3">
    <location>
        <begin position="255"/>
        <end position="415"/>
    </location>
</feature>
<feature type="region of interest" description="Disordered" evidence="4">
    <location>
        <begin position="16"/>
        <end position="38"/>
    </location>
</feature>
<feature type="region of interest" description="Disordered" evidence="4">
    <location>
        <begin position="437"/>
        <end position="485"/>
    </location>
</feature>
<feature type="short sequence motif" description="Q motif">
    <location>
        <begin position="44"/>
        <end position="72"/>
    </location>
</feature>
<feature type="short sequence motif" description="DEAD box">
    <location>
        <begin position="193"/>
        <end position="196"/>
    </location>
</feature>
<feature type="binding site" evidence="2">
    <location>
        <begin position="88"/>
        <end position="95"/>
    </location>
    <ligand>
        <name>ATP</name>
        <dbReference type="ChEBI" id="CHEBI:30616"/>
    </ligand>
</feature>
<name>DHH1_SCHPO</name>
<proteinExistence type="inferred from homology"/>
<protein>
    <recommendedName>
        <fullName>Putative ATP-dependent RNA helicase ste13</fullName>
        <ecNumber>3.6.4.13</ecNumber>
    </recommendedName>
</protein>
<gene>
    <name type="primary">ste13</name>
    <name type="synonym">dhh1</name>
    <name type="ORF">SPBC776.09</name>
</gene>
<evidence type="ECO:0000250" key="1"/>
<evidence type="ECO:0000255" key="2">
    <source>
        <dbReference type="PROSITE-ProRule" id="PRU00541"/>
    </source>
</evidence>
<evidence type="ECO:0000255" key="3">
    <source>
        <dbReference type="PROSITE-ProRule" id="PRU00542"/>
    </source>
</evidence>
<evidence type="ECO:0000256" key="4">
    <source>
        <dbReference type="SAM" id="MobiDB-lite"/>
    </source>
</evidence>
<evidence type="ECO:0000305" key="5"/>
<accession>Q09181</accession>
<comment type="function">
    <text evidence="1">ATP-dependent RNA helicase involved in mRNA turnover, and more specifically in mRNA decapping. Is involved in G1/S DNA-damage checkpoint recovery, probably through the regulation of the translational status of a subset of mRNAs. May also have a role in translation and mRNA nuclear export (By similarity).</text>
</comment>
<comment type="catalytic activity">
    <reaction>
        <text>ATP + H2O = ADP + phosphate + H(+)</text>
        <dbReference type="Rhea" id="RHEA:13065"/>
        <dbReference type="ChEBI" id="CHEBI:15377"/>
        <dbReference type="ChEBI" id="CHEBI:15378"/>
        <dbReference type="ChEBI" id="CHEBI:30616"/>
        <dbReference type="ChEBI" id="CHEBI:43474"/>
        <dbReference type="ChEBI" id="CHEBI:456216"/>
        <dbReference type="EC" id="3.6.4.13"/>
    </reaction>
</comment>
<comment type="subcellular location">
    <subcellularLocation>
        <location evidence="1">Cytoplasm</location>
        <location evidence="1">P-body</location>
    </subcellularLocation>
    <text evidence="1">Is concentrated in several cytoplasmic foci called P bodies (or cytoplasmic processing bodies) which represent sites of mRNA decapping and 5' to 3' exonucleotidic decay.</text>
</comment>
<comment type="domain">
    <text>The Q motif is unique to and characteristic of the DEAD box family of RNA helicases and controls ATP binding and hydrolysis.</text>
</comment>
<comment type="similarity">
    <text evidence="5">Belongs to the DEAD box helicase family. DDX6/DHH1 subfamily.</text>
</comment>
<sequence length="485" mass="54795">MAESLIQKLENANLNDRESFKGQMKAQPVDMRPKTEDVTKTRGTEFEDYYLKRELLMGIFEAGFERPSPIQEESIPIALSGRDILARAKNGTGKTAAFVIPSLEKVDTKKSKIQTLILVPTRELALQTSQVCKTLGKHMNVKVMVTTGGTTLRDDIIRLNDTVHIVVGTPGRVLDLAGKGVADFSECTTFVMDEADKLLSPEFTPIIEQLLSYFPKNRQISLYSATFPLIVKNFMDKHLNKPYEINLMDELTLRGVTQYYAFVDESQKVHCLNTLFSKLQINQSIIFCNSTNRVELLAKKITELGYSCFYSHAKMLQSHRNRVFHNFRNGVCRNLVCSDLLTRGIDIQAVNVVINFDFPKNAETYLHRIGRSGRFGHRGLAISFISWADRFNLYRIENELGTEIQPIPPSIDPSLYVFPNGDYQIPRPLTASADQVLAAQQAKGQEGYHNRPNNNRGGHPRGGGNRGGYRQSNRQPRYRGQQKAD</sequence>
<keyword id="KW-0067">ATP-binding</keyword>
<keyword id="KW-0963">Cytoplasm</keyword>
<keyword id="KW-0347">Helicase</keyword>
<keyword id="KW-0378">Hydrolase</keyword>
<keyword id="KW-0507">mRNA processing</keyword>
<keyword id="KW-0509">mRNA transport</keyword>
<keyword id="KW-0547">Nucleotide-binding</keyword>
<keyword id="KW-1185">Reference proteome</keyword>
<keyword id="KW-0694">RNA-binding</keyword>
<keyword id="KW-0810">Translation regulation</keyword>
<keyword id="KW-0813">Transport</keyword>